<organism>
    <name type="scientific">Prochlorococcus marinus (strain MIT 9211)</name>
    <dbReference type="NCBI Taxonomy" id="93059"/>
    <lineage>
        <taxon>Bacteria</taxon>
        <taxon>Bacillati</taxon>
        <taxon>Cyanobacteriota</taxon>
        <taxon>Cyanophyceae</taxon>
        <taxon>Synechococcales</taxon>
        <taxon>Prochlorococcaceae</taxon>
        <taxon>Prochlorococcus</taxon>
    </lineage>
</organism>
<evidence type="ECO:0000255" key="1">
    <source>
        <dbReference type="HAMAP-Rule" id="MF_01310"/>
    </source>
</evidence>
<evidence type="ECO:0000305" key="2"/>
<name>RS11_PROM4</name>
<comment type="function">
    <text evidence="1">Located on the platform of the 30S subunit, it bridges several disparate RNA helices of the 16S rRNA. Forms part of the Shine-Dalgarno cleft in the 70S ribosome.</text>
</comment>
<comment type="subunit">
    <text evidence="1">Part of the 30S ribosomal subunit. Interacts with proteins S7 and S18. Binds to IF-3.</text>
</comment>
<comment type="similarity">
    <text evidence="1">Belongs to the universal ribosomal protein uS11 family.</text>
</comment>
<protein>
    <recommendedName>
        <fullName evidence="1">Small ribosomal subunit protein uS11</fullName>
    </recommendedName>
    <alternativeName>
        <fullName evidence="2">30S ribosomal protein S11</fullName>
    </alternativeName>
</protein>
<proteinExistence type="inferred from homology"/>
<dbReference type="EMBL" id="CP000878">
    <property type="protein sequence ID" value="ABX09587.1"/>
    <property type="molecule type" value="Genomic_DNA"/>
</dbReference>
<dbReference type="RefSeq" id="WP_012196208.1">
    <property type="nucleotide sequence ID" value="NC_009976.1"/>
</dbReference>
<dbReference type="SMR" id="A9BCM5"/>
<dbReference type="STRING" id="93059.P9211_16561"/>
<dbReference type="KEGG" id="pmj:P9211_16561"/>
<dbReference type="eggNOG" id="COG0100">
    <property type="taxonomic scope" value="Bacteria"/>
</dbReference>
<dbReference type="HOGENOM" id="CLU_072439_5_0_3"/>
<dbReference type="OrthoDB" id="9806415at2"/>
<dbReference type="Proteomes" id="UP000000788">
    <property type="component" value="Chromosome"/>
</dbReference>
<dbReference type="GO" id="GO:1990904">
    <property type="term" value="C:ribonucleoprotein complex"/>
    <property type="evidence" value="ECO:0007669"/>
    <property type="project" value="UniProtKB-KW"/>
</dbReference>
<dbReference type="GO" id="GO:0005840">
    <property type="term" value="C:ribosome"/>
    <property type="evidence" value="ECO:0007669"/>
    <property type="project" value="UniProtKB-KW"/>
</dbReference>
<dbReference type="GO" id="GO:0019843">
    <property type="term" value="F:rRNA binding"/>
    <property type="evidence" value="ECO:0007669"/>
    <property type="project" value="UniProtKB-UniRule"/>
</dbReference>
<dbReference type="GO" id="GO:0003735">
    <property type="term" value="F:structural constituent of ribosome"/>
    <property type="evidence" value="ECO:0007669"/>
    <property type="project" value="InterPro"/>
</dbReference>
<dbReference type="GO" id="GO:0006412">
    <property type="term" value="P:translation"/>
    <property type="evidence" value="ECO:0007669"/>
    <property type="project" value="UniProtKB-UniRule"/>
</dbReference>
<dbReference type="FunFam" id="3.30.420.80:FF:000001">
    <property type="entry name" value="30S ribosomal protein S11"/>
    <property type="match status" value="1"/>
</dbReference>
<dbReference type="Gene3D" id="3.30.420.80">
    <property type="entry name" value="Ribosomal protein S11"/>
    <property type="match status" value="1"/>
</dbReference>
<dbReference type="HAMAP" id="MF_01310">
    <property type="entry name" value="Ribosomal_uS11"/>
    <property type="match status" value="1"/>
</dbReference>
<dbReference type="InterPro" id="IPR001971">
    <property type="entry name" value="Ribosomal_uS11"/>
</dbReference>
<dbReference type="InterPro" id="IPR019981">
    <property type="entry name" value="Ribosomal_uS11_bac-type"/>
</dbReference>
<dbReference type="InterPro" id="IPR018102">
    <property type="entry name" value="Ribosomal_uS11_CS"/>
</dbReference>
<dbReference type="InterPro" id="IPR036967">
    <property type="entry name" value="Ribosomal_uS11_sf"/>
</dbReference>
<dbReference type="NCBIfam" id="NF003698">
    <property type="entry name" value="PRK05309.1"/>
    <property type="match status" value="1"/>
</dbReference>
<dbReference type="NCBIfam" id="TIGR03632">
    <property type="entry name" value="uS11_bact"/>
    <property type="match status" value="1"/>
</dbReference>
<dbReference type="PANTHER" id="PTHR11759">
    <property type="entry name" value="40S RIBOSOMAL PROTEIN S14/30S RIBOSOMAL PROTEIN S11"/>
    <property type="match status" value="1"/>
</dbReference>
<dbReference type="Pfam" id="PF00411">
    <property type="entry name" value="Ribosomal_S11"/>
    <property type="match status" value="1"/>
</dbReference>
<dbReference type="PIRSF" id="PIRSF002131">
    <property type="entry name" value="Ribosomal_S11"/>
    <property type="match status" value="1"/>
</dbReference>
<dbReference type="SUPFAM" id="SSF53137">
    <property type="entry name" value="Translational machinery components"/>
    <property type="match status" value="1"/>
</dbReference>
<dbReference type="PROSITE" id="PS00054">
    <property type="entry name" value="RIBOSOMAL_S11"/>
    <property type="match status" value="1"/>
</dbReference>
<feature type="chain" id="PRO_1000141125" description="Small ribosomal subunit protein uS11">
    <location>
        <begin position="1"/>
        <end position="130"/>
    </location>
</feature>
<gene>
    <name evidence="1" type="primary">rpsK</name>
    <name evidence="1" type="synonym">rps11</name>
    <name type="ordered locus">P9211_16561</name>
</gene>
<sequence>MATPAKKTGSKKSKRNVPNGVVHIQSTFNNTIVSITDTNGEVVSWSSAGASGFKGARKGTPFAAQTAAEAAARRALEQGMRQIEVLVRGPGSGRETAIRALQVAGLEITLIRDVTPLPHNGCRRPKRRRV</sequence>
<keyword id="KW-1185">Reference proteome</keyword>
<keyword id="KW-0687">Ribonucleoprotein</keyword>
<keyword id="KW-0689">Ribosomal protein</keyword>
<keyword id="KW-0694">RNA-binding</keyword>
<keyword id="KW-0699">rRNA-binding</keyword>
<accession>A9BCM5</accession>
<reference key="1">
    <citation type="journal article" date="2007" name="PLoS Genet.">
        <title>Patterns and implications of gene gain and loss in the evolution of Prochlorococcus.</title>
        <authorList>
            <person name="Kettler G.C."/>
            <person name="Martiny A.C."/>
            <person name="Huang K."/>
            <person name="Zucker J."/>
            <person name="Coleman M.L."/>
            <person name="Rodrigue S."/>
            <person name="Chen F."/>
            <person name="Lapidus A."/>
            <person name="Ferriera S."/>
            <person name="Johnson J."/>
            <person name="Steglich C."/>
            <person name="Church G.M."/>
            <person name="Richardson P."/>
            <person name="Chisholm S.W."/>
        </authorList>
    </citation>
    <scope>NUCLEOTIDE SEQUENCE [LARGE SCALE GENOMIC DNA]</scope>
    <source>
        <strain>MIT 9211</strain>
    </source>
</reference>